<comment type="subcellular location">
    <subcellularLocation>
        <location evidence="1">Secreted</location>
    </subcellularLocation>
</comment>
<comment type="tissue specificity">
    <text>Expressed by the venom gland.</text>
</comment>
<comment type="domain">
    <text evidence="1">The presence of a 'disulfide through disulfide knot' structurally defines this protein as a knottin.</text>
</comment>
<comment type="similarity">
    <text evidence="3">Belongs to the neurotoxin 19 (CSTX) family. 04 (U1-Lctx) subfamily.</text>
</comment>
<dbReference type="EMBL" id="EU925947">
    <property type="protein sequence ID" value="ACI41279.1"/>
    <property type="molecule type" value="mRNA"/>
</dbReference>
<dbReference type="EMBL" id="FM863951">
    <property type="protein sequence ID" value="CAS03549.1"/>
    <property type="molecule type" value="mRNA"/>
</dbReference>
<dbReference type="SMR" id="B6DCL3"/>
<dbReference type="ArachnoServer" id="AS000896">
    <property type="toxin name" value="U1-lycotoxin-Ls1k"/>
</dbReference>
<dbReference type="GO" id="GO:0005576">
    <property type="term" value="C:extracellular region"/>
    <property type="evidence" value="ECO:0007669"/>
    <property type="project" value="UniProtKB-SubCell"/>
</dbReference>
<dbReference type="GO" id="GO:0090729">
    <property type="term" value="F:toxin activity"/>
    <property type="evidence" value="ECO:0007669"/>
    <property type="project" value="UniProtKB-KW"/>
</dbReference>
<dbReference type="InterPro" id="IPR019553">
    <property type="entry name" value="Spider_toxin_CSTX_knottin"/>
</dbReference>
<dbReference type="InterPro" id="IPR011142">
    <property type="entry name" value="Spider_toxin_CSTX_Knottin_CS"/>
</dbReference>
<dbReference type="Pfam" id="PF10530">
    <property type="entry name" value="Toxin_35"/>
    <property type="match status" value="1"/>
</dbReference>
<dbReference type="PROSITE" id="PS60029">
    <property type="entry name" value="SPIDER_CSTX"/>
    <property type="match status" value="1"/>
</dbReference>
<keyword id="KW-1015">Disulfide bond</keyword>
<keyword id="KW-0960">Knottin</keyword>
<keyword id="KW-0964">Secreted</keyword>
<keyword id="KW-0732">Signal</keyword>
<keyword id="KW-0800">Toxin</keyword>
<feature type="signal peptide" evidence="2">
    <location>
        <begin position="1"/>
        <end position="20"/>
    </location>
</feature>
<feature type="propeptide" id="PRO_0000401543" evidence="1">
    <location>
        <begin position="21"/>
        <end position="41"/>
    </location>
</feature>
<feature type="chain" id="PRO_0000401544" description="U1-lycotoxin-Ls1k">
    <location>
        <begin position="42"/>
        <end position="107"/>
    </location>
</feature>
<feature type="disulfide bond" evidence="1">
    <location>
        <begin position="44"/>
        <end position="59"/>
    </location>
</feature>
<feature type="disulfide bond" evidence="1">
    <location>
        <begin position="51"/>
        <end position="68"/>
    </location>
</feature>
<feature type="disulfide bond" evidence="1">
    <location>
        <begin position="58"/>
        <end position="86"/>
    </location>
</feature>
<feature type="disulfide bond" evidence="1">
    <location>
        <begin position="70"/>
        <end position="84"/>
    </location>
</feature>
<proteinExistence type="evidence at transcript level"/>
<accession>B6DCL3</accession>
<protein>
    <recommendedName>
        <fullName>U1-lycotoxin-Ls1k</fullName>
    </recommendedName>
    <alternativeName>
        <fullName>Toxin-like structure LSTX-A24</fullName>
    </alternativeName>
</protein>
<organism>
    <name type="scientific">Lycosa singoriensis</name>
    <name type="common">Wolf spider</name>
    <name type="synonym">Aranea singoriensis</name>
    <dbReference type="NCBI Taxonomy" id="434756"/>
    <lineage>
        <taxon>Eukaryota</taxon>
        <taxon>Metazoa</taxon>
        <taxon>Ecdysozoa</taxon>
        <taxon>Arthropoda</taxon>
        <taxon>Chelicerata</taxon>
        <taxon>Arachnida</taxon>
        <taxon>Araneae</taxon>
        <taxon>Araneomorphae</taxon>
        <taxon>Entelegynae</taxon>
        <taxon>Lycosoidea</taxon>
        <taxon>Lycosidae</taxon>
        <taxon>Lycosa</taxon>
    </lineage>
</organism>
<reference key="1">
    <citation type="journal article" date="2010" name="Zoology">
        <title>Transcriptome analysis of the venom glands of the Chinese wolf spider Lycosa singoriensis.</title>
        <authorList>
            <person name="Zhang Y."/>
            <person name="Chen J."/>
            <person name="Tang X."/>
            <person name="Wang F."/>
            <person name="Jiang L."/>
            <person name="Xiong X."/>
            <person name="Wang M."/>
            <person name="Rong M."/>
            <person name="Liu Z."/>
            <person name="Liang S."/>
        </authorList>
    </citation>
    <scope>NUCLEOTIDE SEQUENCE [LARGE SCALE MRNA]</scope>
    <source>
        <tissue>Venom gland</tissue>
    </source>
</reference>
<name>TX124_LYCSI</name>
<sequence length="107" mass="11901">MMKVLVVVALLVTLISYSSSEGIDDLEADELLSLMANEQTRKECIPKHHECTSNKHGCCRGNFFKYKCQCTTVVTQDGEQTERCFCGTPPRHKAAELVVGFGKKIFG</sequence>
<evidence type="ECO:0000250" key="1"/>
<evidence type="ECO:0000255" key="2"/>
<evidence type="ECO:0000305" key="3"/>